<dbReference type="EC" id="3.6.1.54" evidence="1"/>
<dbReference type="EMBL" id="CU928162">
    <property type="protein sequence ID" value="CAR06753.1"/>
    <property type="molecule type" value="Genomic_DNA"/>
</dbReference>
<dbReference type="RefSeq" id="WP_000212238.1">
    <property type="nucleotide sequence ID" value="NC_011745.1"/>
</dbReference>
<dbReference type="SMR" id="B7MRI7"/>
<dbReference type="KEGG" id="ecq:ECED1_0544"/>
<dbReference type="HOGENOM" id="CLU_074586_0_0_6"/>
<dbReference type="UniPathway" id="UPA00359">
    <property type="reaction ID" value="UER00480"/>
</dbReference>
<dbReference type="Proteomes" id="UP000000748">
    <property type="component" value="Chromosome"/>
</dbReference>
<dbReference type="GO" id="GO:0005737">
    <property type="term" value="C:cytoplasm"/>
    <property type="evidence" value="ECO:0007669"/>
    <property type="project" value="InterPro"/>
</dbReference>
<dbReference type="GO" id="GO:0019897">
    <property type="term" value="C:extrinsic component of plasma membrane"/>
    <property type="evidence" value="ECO:0007669"/>
    <property type="project" value="UniProtKB-UniRule"/>
</dbReference>
<dbReference type="GO" id="GO:0030145">
    <property type="term" value="F:manganese ion binding"/>
    <property type="evidence" value="ECO:0007669"/>
    <property type="project" value="UniProtKB-UniRule"/>
</dbReference>
<dbReference type="GO" id="GO:0008758">
    <property type="term" value="F:UDP-2,3-diacylglucosamine hydrolase activity"/>
    <property type="evidence" value="ECO:0007669"/>
    <property type="project" value="UniProtKB-UniRule"/>
</dbReference>
<dbReference type="GO" id="GO:0009245">
    <property type="term" value="P:lipid A biosynthetic process"/>
    <property type="evidence" value="ECO:0007669"/>
    <property type="project" value="UniProtKB-UniRule"/>
</dbReference>
<dbReference type="CDD" id="cd07398">
    <property type="entry name" value="MPP_YbbF-LpxH"/>
    <property type="match status" value="1"/>
</dbReference>
<dbReference type="FunFam" id="3.60.21.10:FF:000012">
    <property type="entry name" value="UDP-2,3-diacylglucosamine hydrolase"/>
    <property type="match status" value="1"/>
</dbReference>
<dbReference type="Gene3D" id="3.60.21.10">
    <property type="match status" value="1"/>
</dbReference>
<dbReference type="HAMAP" id="MF_00575">
    <property type="entry name" value="LpxH"/>
    <property type="match status" value="1"/>
</dbReference>
<dbReference type="InterPro" id="IPR004843">
    <property type="entry name" value="Calcineurin-like_PHP_ApaH"/>
</dbReference>
<dbReference type="InterPro" id="IPR043461">
    <property type="entry name" value="LpxH-like"/>
</dbReference>
<dbReference type="InterPro" id="IPR029052">
    <property type="entry name" value="Metallo-depent_PP-like"/>
</dbReference>
<dbReference type="InterPro" id="IPR010138">
    <property type="entry name" value="UDP-diacylglucosamine_Hdrlase"/>
</dbReference>
<dbReference type="NCBIfam" id="TIGR01854">
    <property type="entry name" value="lipid_A_lpxH"/>
    <property type="match status" value="1"/>
</dbReference>
<dbReference type="NCBIfam" id="NF003743">
    <property type="entry name" value="PRK05340.1"/>
    <property type="match status" value="1"/>
</dbReference>
<dbReference type="PANTHER" id="PTHR34990:SF1">
    <property type="entry name" value="UDP-2,3-DIACYLGLUCOSAMINE HYDROLASE"/>
    <property type="match status" value="1"/>
</dbReference>
<dbReference type="PANTHER" id="PTHR34990">
    <property type="entry name" value="UDP-2,3-DIACYLGLUCOSAMINE HYDROLASE-RELATED"/>
    <property type="match status" value="1"/>
</dbReference>
<dbReference type="Pfam" id="PF00149">
    <property type="entry name" value="Metallophos"/>
    <property type="match status" value="1"/>
</dbReference>
<dbReference type="SUPFAM" id="SSF56300">
    <property type="entry name" value="Metallo-dependent phosphatases"/>
    <property type="match status" value="1"/>
</dbReference>
<sequence length="240" mass="26870">MATLFIADLHLCAEEPAITAGFLRFLAGEARKADALYILGDLFEAWIGDDDPNPLHRQMAAAIKAVSDSGVPCYFIHGNRDFLLGKRFARESGMTLLPEEKVLELYGRRVLIMHGDTLCTDDAGYQAFRAKVHKPWLQTLFLALPLFVRKRIAARMRANSKEANSSKSLAIMDVNQNAVVSAMEKHQVQWLIHGHTHRPAVHELIANQQTAFRVVLGAWHTEGSMVKVTADDVELIHFPF</sequence>
<accession>B7MRI7</accession>
<organism>
    <name type="scientific">Escherichia coli O81 (strain ED1a)</name>
    <dbReference type="NCBI Taxonomy" id="585397"/>
    <lineage>
        <taxon>Bacteria</taxon>
        <taxon>Pseudomonadati</taxon>
        <taxon>Pseudomonadota</taxon>
        <taxon>Gammaproteobacteria</taxon>
        <taxon>Enterobacterales</taxon>
        <taxon>Enterobacteriaceae</taxon>
        <taxon>Escherichia</taxon>
    </lineage>
</organism>
<comment type="function">
    <text evidence="1">Hydrolyzes the pyrophosphate bond of UDP-2,3-diacylglucosamine to yield 2,3-diacylglucosamine 1-phosphate (lipid X) and UMP by catalyzing the attack of water at the alpha-P atom. Involved in the biosynthesis of lipid A, a phosphorylated glycolipid that anchors the lipopolysaccharide to the outer membrane of the cell.</text>
</comment>
<comment type="catalytic activity">
    <reaction evidence="1">
        <text>UDP-2-N,3-O-bis[(3R)-3-hydroxytetradecanoyl]-alpha-D-glucosamine + H2O = 2-N,3-O-bis[(3R)-3-hydroxytetradecanoyl]-alpha-D-glucosaminyl 1-phosphate + UMP + 2 H(+)</text>
        <dbReference type="Rhea" id="RHEA:25213"/>
        <dbReference type="ChEBI" id="CHEBI:15377"/>
        <dbReference type="ChEBI" id="CHEBI:15378"/>
        <dbReference type="ChEBI" id="CHEBI:57865"/>
        <dbReference type="ChEBI" id="CHEBI:57957"/>
        <dbReference type="ChEBI" id="CHEBI:78847"/>
        <dbReference type="EC" id="3.6.1.54"/>
    </reaction>
</comment>
<comment type="cofactor">
    <cofactor evidence="1">
        <name>Mn(2+)</name>
        <dbReference type="ChEBI" id="CHEBI:29035"/>
    </cofactor>
    <text evidence="1">Binds 2 Mn(2+) ions per subunit in a binuclear metal center.</text>
</comment>
<comment type="pathway">
    <text evidence="1">Glycolipid biosynthesis; lipid IV(A) biosynthesis; lipid IV(A) from (3R)-3-hydroxytetradecanoyl-[acyl-carrier-protein] and UDP-N-acetyl-alpha-D-glucosamine: step 4/6.</text>
</comment>
<comment type="subcellular location">
    <subcellularLocation>
        <location evidence="1">Cell inner membrane</location>
        <topology evidence="1">Peripheral membrane protein</topology>
        <orientation evidence="1">Cytoplasmic side</orientation>
    </subcellularLocation>
</comment>
<comment type="similarity">
    <text evidence="1">Belongs to the LpxH family.</text>
</comment>
<keyword id="KW-0997">Cell inner membrane</keyword>
<keyword id="KW-1003">Cell membrane</keyword>
<keyword id="KW-0378">Hydrolase</keyword>
<keyword id="KW-0441">Lipid A biosynthesis</keyword>
<keyword id="KW-0444">Lipid biosynthesis</keyword>
<keyword id="KW-0443">Lipid metabolism</keyword>
<keyword id="KW-0464">Manganese</keyword>
<keyword id="KW-0472">Membrane</keyword>
<keyword id="KW-0479">Metal-binding</keyword>
<feature type="chain" id="PRO_1000191029" description="UDP-2,3-diacylglucosamine hydrolase">
    <location>
        <begin position="1"/>
        <end position="240"/>
    </location>
</feature>
<feature type="binding site" evidence="1">
    <location>
        <position position="8"/>
    </location>
    <ligand>
        <name>Mn(2+)</name>
        <dbReference type="ChEBI" id="CHEBI:29035"/>
        <label>1</label>
    </ligand>
</feature>
<feature type="binding site" evidence="1">
    <location>
        <position position="10"/>
    </location>
    <ligand>
        <name>Mn(2+)</name>
        <dbReference type="ChEBI" id="CHEBI:29035"/>
        <label>1</label>
    </ligand>
</feature>
<feature type="binding site" evidence="1">
    <location>
        <position position="41"/>
    </location>
    <ligand>
        <name>Mn(2+)</name>
        <dbReference type="ChEBI" id="CHEBI:29035"/>
        <label>1</label>
    </ligand>
</feature>
<feature type="binding site" evidence="1">
    <location>
        <position position="41"/>
    </location>
    <ligand>
        <name>Mn(2+)</name>
        <dbReference type="ChEBI" id="CHEBI:29035"/>
        <label>2</label>
    </ligand>
</feature>
<feature type="binding site" evidence="1">
    <location>
        <begin position="79"/>
        <end position="80"/>
    </location>
    <ligand>
        <name>substrate</name>
    </ligand>
</feature>
<feature type="binding site" evidence="1">
    <location>
        <position position="79"/>
    </location>
    <ligand>
        <name>Mn(2+)</name>
        <dbReference type="ChEBI" id="CHEBI:29035"/>
        <label>2</label>
    </ligand>
</feature>
<feature type="binding site" evidence="1">
    <location>
        <position position="114"/>
    </location>
    <ligand>
        <name>Mn(2+)</name>
        <dbReference type="ChEBI" id="CHEBI:29035"/>
        <label>2</label>
    </ligand>
</feature>
<feature type="binding site" evidence="1">
    <location>
        <position position="122"/>
    </location>
    <ligand>
        <name>substrate</name>
    </ligand>
</feature>
<feature type="binding site" evidence="1">
    <location>
        <position position="160"/>
    </location>
    <ligand>
        <name>substrate</name>
    </ligand>
</feature>
<feature type="binding site" evidence="1">
    <location>
        <position position="164"/>
    </location>
    <ligand>
        <name>substrate</name>
    </ligand>
</feature>
<feature type="binding site" evidence="1">
    <location>
        <position position="167"/>
    </location>
    <ligand>
        <name>substrate</name>
    </ligand>
</feature>
<feature type="binding site" evidence="1">
    <location>
        <position position="195"/>
    </location>
    <ligand>
        <name>Mn(2+)</name>
        <dbReference type="ChEBI" id="CHEBI:29035"/>
        <label>2</label>
    </ligand>
</feature>
<feature type="binding site" evidence="1">
    <location>
        <position position="195"/>
    </location>
    <ligand>
        <name>substrate</name>
    </ligand>
</feature>
<feature type="binding site" evidence="1">
    <location>
        <position position="197"/>
    </location>
    <ligand>
        <name>Mn(2+)</name>
        <dbReference type="ChEBI" id="CHEBI:29035"/>
        <label>1</label>
    </ligand>
</feature>
<proteinExistence type="inferred from homology"/>
<reference key="1">
    <citation type="journal article" date="2009" name="PLoS Genet.">
        <title>Organised genome dynamics in the Escherichia coli species results in highly diverse adaptive paths.</title>
        <authorList>
            <person name="Touchon M."/>
            <person name="Hoede C."/>
            <person name="Tenaillon O."/>
            <person name="Barbe V."/>
            <person name="Baeriswyl S."/>
            <person name="Bidet P."/>
            <person name="Bingen E."/>
            <person name="Bonacorsi S."/>
            <person name="Bouchier C."/>
            <person name="Bouvet O."/>
            <person name="Calteau A."/>
            <person name="Chiapello H."/>
            <person name="Clermont O."/>
            <person name="Cruveiller S."/>
            <person name="Danchin A."/>
            <person name="Diard M."/>
            <person name="Dossat C."/>
            <person name="Karoui M.E."/>
            <person name="Frapy E."/>
            <person name="Garry L."/>
            <person name="Ghigo J.M."/>
            <person name="Gilles A.M."/>
            <person name="Johnson J."/>
            <person name="Le Bouguenec C."/>
            <person name="Lescat M."/>
            <person name="Mangenot S."/>
            <person name="Martinez-Jehanne V."/>
            <person name="Matic I."/>
            <person name="Nassif X."/>
            <person name="Oztas S."/>
            <person name="Petit M.A."/>
            <person name="Pichon C."/>
            <person name="Rouy Z."/>
            <person name="Ruf C.S."/>
            <person name="Schneider D."/>
            <person name="Tourret J."/>
            <person name="Vacherie B."/>
            <person name="Vallenet D."/>
            <person name="Medigue C."/>
            <person name="Rocha E.P.C."/>
            <person name="Denamur E."/>
        </authorList>
    </citation>
    <scope>NUCLEOTIDE SEQUENCE [LARGE SCALE GENOMIC DNA]</scope>
    <source>
        <strain>ED1a</strain>
    </source>
</reference>
<evidence type="ECO:0000255" key="1">
    <source>
        <dbReference type="HAMAP-Rule" id="MF_00575"/>
    </source>
</evidence>
<gene>
    <name evidence="1" type="primary">lpxH</name>
    <name type="ordered locus">ECED1_0544</name>
</gene>
<protein>
    <recommendedName>
        <fullName evidence="1">UDP-2,3-diacylglucosamine hydrolase</fullName>
        <ecNumber evidence="1">3.6.1.54</ecNumber>
    </recommendedName>
    <alternativeName>
        <fullName evidence="1">UDP-2,3-diacylglucosamine diphosphatase</fullName>
    </alternativeName>
</protein>
<name>LPXH_ECO81</name>